<sequence>MFKIYNIKSRIIRENMNNKLFDKTIEHVIKYLNENIFFEKYTRISGLLQNIESRIKIISLVIFLVGSVLSKHILTLIIFNSIALILAYLSNIPLLQYLKRVYVFIPIFAGIIAIPVMFNFMTPGKDVFVILNNPHISITYEGLIYAITFTLRVATCVSFAVLIPITTQWNKVTSAIHKLGVPEVVITITNLAYRYIFLLLNFVLDMMYSRKSRVVNKLGMVESWKEAGKAIGALFIKTYQMGEDXYYAMLSRGYNGEIKHIYREEIKIKDIAFLLFSIIITALLVLFDRGIL</sequence>
<proteinExistence type="inferred from homology"/>
<organism>
    <name type="scientific">Methanocaldococcus jannaschii (strain ATCC 43067 / DSM 2661 / JAL-1 / JCM 10045 / NBRC 100440)</name>
    <name type="common">Methanococcus jannaschii</name>
    <dbReference type="NCBI Taxonomy" id="243232"/>
    <lineage>
        <taxon>Archaea</taxon>
        <taxon>Methanobacteriati</taxon>
        <taxon>Methanobacteriota</taxon>
        <taxon>Methanomada group</taxon>
        <taxon>Methanococci</taxon>
        <taxon>Methanococcales</taxon>
        <taxon>Methanocaldococcaceae</taxon>
        <taxon>Methanocaldococcus</taxon>
    </lineage>
</organism>
<name>Y1571_METJA</name>
<gene>
    <name type="ordered locus">MJ1571</name>
</gene>
<keyword id="KW-1003">Cell membrane</keyword>
<keyword id="KW-0472">Membrane</keyword>
<keyword id="KW-1185">Reference proteome</keyword>
<keyword id="KW-0812">Transmembrane</keyword>
<keyword id="KW-1133">Transmembrane helix</keyword>
<feature type="chain" id="PRO_0000107419" description="Uncharacterized protein MJ1571">
    <location>
        <begin position="1"/>
        <end position="292"/>
    </location>
</feature>
<feature type="transmembrane region" description="Helical" evidence="1">
    <location>
        <begin position="57"/>
        <end position="77"/>
    </location>
</feature>
<feature type="transmembrane region" description="Helical" evidence="1">
    <location>
        <begin position="101"/>
        <end position="121"/>
    </location>
</feature>
<feature type="transmembrane region" description="Helical" evidence="1">
    <location>
        <begin position="143"/>
        <end position="163"/>
    </location>
</feature>
<feature type="transmembrane region" description="Helical" evidence="1">
    <location>
        <begin position="184"/>
        <end position="204"/>
    </location>
</feature>
<feature type="transmembrane region" description="Helical" evidence="1">
    <location>
        <begin position="271"/>
        <end position="291"/>
    </location>
</feature>
<evidence type="ECO:0000255" key="1"/>
<evidence type="ECO:0000305" key="2"/>
<reference key="1">
    <citation type="journal article" date="1996" name="Science">
        <title>Complete genome sequence of the methanogenic archaeon, Methanococcus jannaschii.</title>
        <authorList>
            <person name="Bult C.J."/>
            <person name="White O."/>
            <person name="Olsen G.J."/>
            <person name="Zhou L."/>
            <person name="Fleischmann R.D."/>
            <person name="Sutton G.G."/>
            <person name="Blake J.A."/>
            <person name="FitzGerald L.M."/>
            <person name="Clayton R.A."/>
            <person name="Gocayne J.D."/>
            <person name="Kerlavage A.R."/>
            <person name="Dougherty B.A."/>
            <person name="Tomb J.-F."/>
            <person name="Adams M.D."/>
            <person name="Reich C.I."/>
            <person name="Overbeek R."/>
            <person name="Kirkness E.F."/>
            <person name="Weinstock K.G."/>
            <person name="Merrick J.M."/>
            <person name="Glodek A."/>
            <person name="Scott J.L."/>
            <person name="Geoghagen N.S.M."/>
            <person name="Weidman J.F."/>
            <person name="Fuhrmann J.L."/>
            <person name="Nguyen D."/>
            <person name="Utterback T.R."/>
            <person name="Kelley J.M."/>
            <person name="Peterson J.D."/>
            <person name="Sadow P.W."/>
            <person name="Hanna M.C."/>
            <person name="Cotton M.D."/>
            <person name="Roberts K.M."/>
            <person name="Hurst M.A."/>
            <person name="Kaine B.P."/>
            <person name="Borodovsky M."/>
            <person name="Klenk H.-P."/>
            <person name="Fraser C.M."/>
            <person name="Smith H.O."/>
            <person name="Woese C.R."/>
            <person name="Venter J.C."/>
        </authorList>
    </citation>
    <scope>NUCLEOTIDE SEQUENCE [LARGE SCALE GENOMIC DNA]</scope>
    <source>
        <strain>ATCC 43067 / DSM 2661 / JAL-1 / JCM 10045 / NBRC 100440</strain>
    </source>
</reference>
<comment type="subcellular location">
    <subcellularLocation>
        <location evidence="2">Cell membrane</location>
        <topology evidence="2">Multi-pass membrane protein</topology>
    </subcellularLocation>
</comment>
<comment type="similarity">
    <text evidence="2">Belongs to the CbiQ family.</text>
</comment>
<accession>Q58966</accession>
<protein>
    <recommendedName>
        <fullName>Uncharacterized protein MJ1571</fullName>
    </recommendedName>
</protein>
<dbReference type="EMBL" id="L77117">
    <property type="protein sequence ID" value="AAB99588.1"/>
    <property type="molecule type" value="Genomic_DNA"/>
</dbReference>
<dbReference type="PIR" id="B64496">
    <property type="entry name" value="B64496"/>
</dbReference>
<dbReference type="STRING" id="243232.MJ_1571"/>
<dbReference type="PaxDb" id="243232-MJ_1571"/>
<dbReference type="EnsemblBacteria" id="AAB99588">
    <property type="protein sequence ID" value="AAB99588"/>
    <property type="gene ID" value="MJ_1571"/>
</dbReference>
<dbReference type="KEGG" id="mja:MJ_1571"/>
<dbReference type="eggNOG" id="arCOG02250">
    <property type="taxonomic scope" value="Archaea"/>
</dbReference>
<dbReference type="HOGENOM" id="CLU_056469_1_0_2"/>
<dbReference type="InParanoid" id="Q58966"/>
<dbReference type="PhylomeDB" id="Q58966"/>
<dbReference type="Proteomes" id="UP000000805">
    <property type="component" value="Chromosome"/>
</dbReference>
<dbReference type="GO" id="GO:0043190">
    <property type="term" value="C:ATP-binding cassette (ABC) transporter complex"/>
    <property type="evidence" value="ECO:0007669"/>
    <property type="project" value="InterPro"/>
</dbReference>
<dbReference type="GO" id="GO:0006824">
    <property type="term" value="P:cobalt ion transport"/>
    <property type="evidence" value="ECO:0007669"/>
    <property type="project" value="InterPro"/>
</dbReference>
<dbReference type="CDD" id="cd16914">
    <property type="entry name" value="EcfT"/>
    <property type="match status" value="1"/>
</dbReference>
<dbReference type="InterPro" id="IPR003339">
    <property type="entry name" value="ABC/ECF_trnsptr_transmembrane"/>
</dbReference>
<dbReference type="InterPro" id="IPR012809">
    <property type="entry name" value="ECF_CbiQ"/>
</dbReference>
<dbReference type="InterPro" id="IPR051611">
    <property type="entry name" value="ECF_transporter_component"/>
</dbReference>
<dbReference type="NCBIfam" id="TIGR02454">
    <property type="entry name" value="ECF_T_CbiQ"/>
    <property type="match status" value="1"/>
</dbReference>
<dbReference type="PANTHER" id="PTHR34857">
    <property type="entry name" value="SLL0384 PROTEIN"/>
    <property type="match status" value="1"/>
</dbReference>
<dbReference type="PANTHER" id="PTHR34857:SF2">
    <property type="entry name" value="SLL0384 PROTEIN"/>
    <property type="match status" value="1"/>
</dbReference>
<dbReference type="Pfam" id="PF02361">
    <property type="entry name" value="CbiQ"/>
    <property type="match status" value="1"/>
</dbReference>